<reference key="1">
    <citation type="journal article" date="1995" name="FEBS Lett.">
        <title>Identification of bovine stefin A, a novel protein inhibitor of cysteine proteinases.</title>
        <authorList>
            <person name="Turk B."/>
            <person name="Ritonja A."/>
            <person name="Bjoerk I."/>
            <person name="Stoka V."/>
            <person name="Dolenc I."/>
            <person name="Turk V."/>
        </authorList>
    </citation>
    <scope>PROTEIN SEQUENCE</scope>
    <source>
        <tissue>Skin</tissue>
    </source>
</reference>
<name>CYTA_BOVIN</name>
<accession>P80416</accession>
<keyword id="KW-0007">Acetylation</keyword>
<keyword id="KW-0963">Cytoplasm</keyword>
<keyword id="KW-0903">Direct protein sequencing</keyword>
<keyword id="KW-0646">Protease inhibitor</keyword>
<keyword id="KW-1185">Reference proteome</keyword>
<keyword id="KW-0789">Thiol protease inhibitor</keyword>
<proteinExistence type="evidence at protein level"/>
<evidence type="ECO:0000250" key="1"/>
<evidence type="ECO:0000250" key="2">
    <source>
        <dbReference type="UniProtKB" id="P01039"/>
    </source>
</evidence>
<evidence type="ECO:0000305" key="3"/>
<dbReference type="PIR" id="S69086">
    <property type="entry name" value="S69086"/>
</dbReference>
<dbReference type="SMR" id="P80416"/>
<dbReference type="FunCoup" id="P80416">
    <property type="interactions" value="34"/>
</dbReference>
<dbReference type="STRING" id="9913.ENSBTAP00000014138"/>
<dbReference type="MEROPS" id="I25.001"/>
<dbReference type="PaxDb" id="9913-ENSBTAP00000014138"/>
<dbReference type="eggNOG" id="ENOG502SF2X">
    <property type="taxonomic scope" value="Eukaryota"/>
</dbReference>
<dbReference type="InParanoid" id="P80416"/>
<dbReference type="OrthoDB" id="2429551at2759"/>
<dbReference type="Proteomes" id="UP000009136">
    <property type="component" value="Unplaced"/>
</dbReference>
<dbReference type="GO" id="GO:0005829">
    <property type="term" value="C:cytosol"/>
    <property type="evidence" value="ECO:0000318"/>
    <property type="project" value="GO_Central"/>
</dbReference>
<dbReference type="GO" id="GO:0004869">
    <property type="term" value="F:cysteine-type endopeptidase inhibitor activity"/>
    <property type="evidence" value="ECO:0000318"/>
    <property type="project" value="GO_Central"/>
</dbReference>
<dbReference type="CDD" id="cd00042">
    <property type="entry name" value="CY"/>
    <property type="match status" value="1"/>
</dbReference>
<dbReference type="FunFam" id="3.10.450.10:FF:000001">
    <property type="entry name" value="Cystatin-A"/>
    <property type="match status" value="1"/>
</dbReference>
<dbReference type="Gene3D" id="3.10.450.10">
    <property type="match status" value="1"/>
</dbReference>
<dbReference type="InterPro" id="IPR000010">
    <property type="entry name" value="Cystatin_dom"/>
</dbReference>
<dbReference type="InterPro" id="IPR046350">
    <property type="entry name" value="Cystatin_sf"/>
</dbReference>
<dbReference type="InterPro" id="IPR018073">
    <property type="entry name" value="Prot_inh_cystat_CS"/>
</dbReference>
<dbReference type="InterPro" id="IPR001713">
    <property type="entry name" value="Prot_inh_stefin"/>
</dbReference>
<dbReference type="PANTHER" id="PTHR11414">
    <property type="entry name" value="CYSTATIN FAMILY MEMBER"/>
    <property type="match status" value="1"/>
</dbReference>
<dbReference type="PANTHER" id="PTHR11414:SF20">
    <property type="entry name" value="CYSTATIN-A"/>
    <property type="match status" value="1"/>
</dbReference>
<dbReference type="Pfam" id="PF00031">
    <property type="entry name" value="Cystatin"/>
    <property type="match status" value="1"/>
</dbReference>
<dbReference type="PRINTS" id="PR00295">
    <property type="entry name" value="STEFINA"/>
</dbReference>
<dbReference type="SMART" id="SM00043">
    <property type="entry name" value="CY"/>
    <property type="match status" value="1"/>
</dbReference>
<dbReference type="SUPFAM" id="SSF54403">
    <property type="entry name" value="Cystatin/monellin"/>
    <property type="match status" value="1"/>
</dbReference>
<dbReference type="PROSITE" id="PS00287">
    <property type="entry name" value="CYSTATIN"/>
    <property type="match status" value="1"/>
</dbReference>
<organism>
    <name type="scientific">Bos taurus</name>
    <name type="common">Bovine</name>
    <dbReference type="NCBI Taxonomy" id="9913"/>
    <lineage>
        <taxon>Eukaryota</taxon>
        <taxon>Metazoa</taxon>
        <taxon>Chordata</taxon>
        <taxon>Craniata</taxon>
        <taxon>Vertebrata</taxon>
        <taxon>Euteleostomi</taxon>
        <taxon>Mammalia</taxon>
        <taxon>Eutheria</taxon>
        <taxon>Laurasiatheria</taxon>
        <taxon>Artiodactyla</taxon>
        <taxon>Ruminantia</taxon>
        <taxon>Pecora</taxon>
        <taxon>Bovidae</taxon>
        <taxon>Bovinae</taxon>
        <taxon>Bos</taxon>
    </lineage>
</organism>
<comment type="function">
    <text>This is an intracellular thiol proteinase inhibitor.</text>
</comment>
<comment type="subcellular location">
    <subcellularLocation>
        <location>Cytoplasm</location>
    </subcellularLocation>
</comment>
<comment type="similarity">
    <text evidence="3">Belongs to the cystatin family.</text>
</comment>
<gene>
    <name type="primary">CSTA</name>
    <name type="synonym">STF1</name>
</gene>
<feature type="chain" id="PRO_0000207126" description="Cystatin-A">
    <location>
        <begin position="1"/>
        <end position="98"/>
    </location>
</feature>
<feature type="short sequence motif" description="Secondary area of contact">
    <location>
        <begin position="46"/>
        <end position="50"/>
    </location>
</feature>
<feature type="site" description="Reactive site" evidence="1">
    <location>
        <position position="4"/>
    </location>
</feature>
<feature type="modified residue" description="N-acetylmethionine" evidence="2">
    <location>
        <position position="1"/>
    </location>
</feature>
<sequence length="98" mass="11124">MIPGGLTEAKPATIEIQEIANMVKPQLEEKTNETYEEFTAIEYKSQVVAGINYYIKIQTGDNRYIHIKVFKSLPQQSHSLILTGYQVDKTKDDELAGF</sequence>
<protein>
    <recommendedName>
        <fullName>Cystatin-A</fullName>
    </recommendedName>
    <alternativeName>
        <fullName>Cystatin-AS</fullName>
    </alternativeName>
    <alternativeName>
        <fullName>Stefin-A</fullName>
    </alternativeName>
</protein>